<comment type="function">
    <text evidence="1">Usually encoded in the trnK tRNA gene intron. Probably assists in splicing its own and other chloroplast group II introns.</text>
</comment>
<comment type="subcellular location">
    <subcellularLocation>
        <location>Plastid</location>
        <location>Chloroplast</location>
    </subcellularLocation>
</comment>
<comment type="similarity">
    <text evidence="1">Belongs to the intron maturase 2 family. MatK subfamily.</text>
</comment>
<sequence length="509" mass="60673">MDEFHRYGKEDSSWQQCFLYPLFFQEDLYAIYHDHYLDGSSSSESMEHLSSNDQFSFLTVKRLIGQIRQQNNSIVFFLNCDPNPLVDRNKSFYYESVLEGLTLVLEVPFSIRSKYSVEGMNEWKSFRSIHSIFPFLEDKFPHSNYILDTRIPYSIHPEILVRTFRRWIRDAPSLHPLRSVLYKYRNSPDNLQKSIIIDPRVNTRFLLFLWNHYVYGCESILVPLLKRSFHPRSLSHGSFPDQTHFDRKIKHIIRNYRRNSLKSIWSLKDPRIHYVRYAERSIIAIKGTHLLVKKCRYHLPIFRQFYFHLWSEPYRVCSHQLSKNCSSSLGYFLRVRMKPLLVRTKMLDELFITDLITDEFDPIVPIVPIIGLLAREKLCDISGRPISKLYWTSLTDDDILDRFDRIWKNIFHYYSGSLDRDGLYRIKYILSLSCAKTLACKHKSTIRVVRKELGPELFKKYFSKEREFDFPAFSSKAAARSQRERIWHSDIPQINPLANSWQKIQDLKS</sequence>
<organism>
    <name type="scientific">Abies firma</name>
    <name type="common">Momi fir</name>
    <dbReference type="NCBI Taxonomy" id="78260"/>
    <lineage>
        <taxon>Eukaryota</taxon>
        <taxon>Viridiplantae</taxon>
        <taxon>Streptophyta</taxon>
        <taxon>Embryophyta</taxon>
        <taxon>Tracheophyta</taxon>
        <taxon>Spermatophyta</taxon>
        <taxon>Pinopsida</taxon>
        <taxon>Pinidae</taxon>
        <taxon>Conifers I</taxon>
        <taxon>Pinales</taxon>
        <taxon>Pinaceae</taxon>
        <taxon>Abies</taxon>
    </lineage>
</organism>
<accession>Q9MV51</accession>
<proteinExistence type="inferred from homology"/>
<evidence type="ECO:0000255" key="1">
    <source>
        <dbReference type="HAMAP-Rule" id="MF_01390"/>
    </source>
</evidence>
<name>MATK_ABIFI</name>
<dbReference type="EMBL" id="AF143436">
    <property type="protein sequence ID" value="AAF69191.1"/>
    <property type="molecule type" value="Genomic_DNA"/>
</dbReference>
<dbReference type="GO" id="GO:0009507">
    <property type="term" value="C:chloroplast"/>
    <property type="evidence" value="ECO:0007669"/>
    <property type="project" value="UniProtKB-SubCell"/>
</dbReference>
<dbReference type="GO" id="GO:0003723">
    <property type="term" value="F:RNA binding"/>
    <property type="evidence" value="ECO:0007669"/>
    <property type="project" value="UniProtKB-KW"/>
</dbReference>
<dbReference type="GO" id="GO:0006397">
    <property type="term" value="P:mRNA processing"/>
    <property type="evidence" value="ECO:0007669"/>
    <property type="project" value="UniProtKB-KW"/>
</dbReference>
<dbReference type="GO" id="GO:0008380">
    <property type="term" value="P:RNA splicing"/>
    <property type="evidence" value="ECO:0007669"/>
    <property type="project" value="UniProtKB-UniRule"/>
</dbReference>
<dbReference type="GO" id="GO:0008033">
    <property type="term" value="P:tRNA processing"/>
    <property type="evidence" value="ECO:0007669"/>
    <property type="project" value="UniProtKB-KW"/>
</dbReference>
<dbReference type="HAMAP" id="MF_01390">
    <property type="entry name" value="MatK"/>
    <property type="match status" value="1"/>
</dbReference>
<dbReference type="InterPro" id="IPR024937">
    <property type="entry name" value="Domain_X"/>
</dbReference>
<dbReference type="InterPro" id="IPR002866">
    <property type="entry name" value="Maturase_MatK"/>
</dbReference>
<dbReference type="InterPro" id="IPR024942">
    <property type="entry name" value="Maturase_MatK_N"/>
</dbReference>
<dbReference type="PANTHER" id="PTHR34811">
    <property type="entry name" value="MATURASE K"/>
    <property type="match status" value="1"/>
</dbReference>
<dbReference type="PANTHER" id="PTHR34811:SF1">
    <property type="entry name" value="MATURASE K"/>
    <property type="match status" value="1"/>
</dbReference>
<dbReference type="Pfam" id="PF01348">
    <property type="entry name" value="Intron_maturas2"/>
    <property type="match status" value="1"/>
</dbReference>
<dbReference type="Pfam" id="PF01824">
    <property type="entry name" value="MatK_N"/>
    <property type="match status" value="1"/>
</dbReference>
<protein>
    <recommendedName>
        <fullName evidence="1">Maturase K</fullName>
    </recommendedName>
    <alternativeName>
        <fullName evidence="1">Intron maturase</fullName>
    </alternativeName>
</protein>
<feature type="chain" id="PRO_0000143195" description="Maturase K">
    <location>
        <begin position="1"/>
        <end position="509"/>
    </location>
</feature>
<gene>
    <name evidence="1" type="primary">matK</name>
</gene>
<reference key="1">
    <citation type="journal article" date="2000" name="Mol. Biol. Evol.">
        <title>Phylogeny and divergence times in Pinaceae: evidence from three genomes.</title>
        <authorList>
            <person name="Wang X.Q."/>
            <person name="Tank D.C."/>
            <person name="Sang T."/>
        </authorList>
    </citation>
    <scope>NUCLEOTIDE SEQUENCE [GENOMIC DNA]</scope>
</reference>
<keyword id="KW-0150">Chloroplast</keyword>
<keyword id="KW-0507">mRNA processing</keyword>
<keyword id="KW-0934">Plastid</keyword>
<keyword id="KW-0694">RNA-binding</keyword>
<keyword id="KW-0819">tRNA processing</keyword>
<geneLocation type="chloroplast"/>